<proteinExistence type="evidence at protein level"/>
<accession>P00229</accession>
<name>FER1_PHYAM</name>
<organism>
    <name type="scientific">Phytolacca americana</name>
    <name type="common">American pokeweed</name>
    <name type="synonym">Phytolacca decandra</name>
    <dbReference type="NCBI Taxonomy" id="3527"/>
    <lineage>
        <taxon>Eukaryota</taxon>
        <taxon>Viridiplantae</taxon>
        <taxon>Streptophyta</taxon>
        <taxon>Embryophyta</taxon>
        <taxon>Tracheophyta</taxon>
        <taxon>Spermatophyta</taxon>
        <taxon>Magnoliopsida</taxon>
        <taxon>eudicotyledons</taxon>
        <taxon>Gunneridae</taxon>
        <taxon>Pentapetalae</taxon>
        <taxon>Caryophyllales</taxon>
        <taxon>Phytolaccaceae</taxon>
        <taxon>Phytolacca</taxon>
    </lineage>
</organism>
<reference key="1">
    <citation type="journal article" date="1978" name="J. Biochem.">
        <title>Amino acid sequences of two ferredoxins from pokeweed, Phytolacca americana.</title>
        <authorList>
            <person name="Wakabayashi S."/>
            <person name="Hase T."/>
            <person name="Wada K."/>
            <person name="Matsubara H."/>
            <person name="Suzuki K."/>
            <person name="Takaichi S."/>
        </authorList>
    </citation>
    <scope>PROTEIN SEQUENCE</scope>
</reference>
<sequence length="96" mass="10184">ATYKVTLVTPSGTQTIDCPDDTYVLDAAEEAGLDLPYSCRAGSCSSCTGKVTAGTVDQEDQSFLDDDQIEAGFVLTCVAFPKGDVTIETHKEEDIV</sequence>
<comment type="function">
    <text>Ferredoxins are iron-sulfur proteins that transfer electrons in a wide variety of metabolic reactions.</text>
</comment>
<comment type="cofactor">
    <cofactor>
        <name>[2Fe-2S] cluster</name>
        <dbReference type="ChEBI" id="CHEBI:190135"/>
    </cofactor>
    <text>Binds 1 [2Fe-2S] cluster.</text>
</comment>
<comment type="subcellular location">
    <subcellularLocation>
        <location>Plastid</location>
        <location>Chloroplast</location>
    </subcellularLocation>
</comment>
<comment type="similarity">
    <text evidence="2">Belongs to the 2Fe2S plant-type ferredoxin family.</text>
</comment>
<feature type="chain" id="PRO_0000189348" description="Ferredoxin-1">
    <location>
        <begin position="1"/>
        <end position="96"/>
    </location>
</feature>
<feature type="domain" description="2Fe-2S ferredoxin-type" evidence="1">
    <location>
        <begin position="3"/>
        <end position="93"/>
    </location>
</feature>
<feature type="binding site" evidence="1">
    <location>
        <position position="39"/>
    </location>
    <ligand>
        <name>[2Fe-2S] cluster</name>
        <dbReference type="ChEBI" id="CHEBI:190135"/>
    </ligand>
</feature>
<feature type="binding site" evidence="1">
    <location>
        <position position="44"/>
    </location>
    <ligand>
        <name>[2Fe-2S] cluster</name>
        <dbReference type="ChEBI" id="CHEBI:190135"/>
    </ligand>
</feature>
<feature type="binding site" evidence="1">
    <location>
        <position position="47"/>
    </location>
    <ligand>
        <name>[2Fe-2S] cluster</name>
        <dbReference type="ChEBI" id="CHEBI:190135"/>
    </ligand>
</feature>
<feature type="binding site" evidence="1">
    <location>
        <position position="77"/>
    </location>
    <ligand>
        <name>[2Fe-2S] cluster</name>
        <dbReference type="ChEBI" id="CHEBI:190135"/>
    </ligand>
</feature>
<protein>
    <recommendedName>
        <fullName>Ferredoxin-1</fullName>
    </recommendedName>
    <alternativeName>
        <fullName>Ferredoxin I</fullName>
    </alternativeName>
</protein>
<dbReference type="PIR" id="A00236">
    <property type="entry name" value="FEFW1"/>
</dbReference>
<dbReference type="SMR" id="P00229"/>
<dbReference type="GO" id="GO:0009570">
    <property type="term" value="C:chloroplast stroma"/>
    <property type="evidence" value="ECO:0007669"/>
    <property type="project" value="TreeGrafter"/>
</dbReference>
<dbReference type="GO" id="GO:0051537">
    <property type="term" value="F:2 iron, 2 sulfur cluster binding"/>
    <property type="evidence" value="ECO:0007669"/>
    <property type="project" value="UniProtKB-KW"/>
</dbReference>
<dbReference type="GO" id="GO:0009055">
    <property type="term" value="F:electron transfer activity"/>
    <property type="evidence" value="ECO:0007669"/>
    <property type="project" value="InterPro"/>
</dbReference>
<dbReference type="GO" id="GO:0046872">
    <property type="term" value="F:metal ion binding"/>
    <property type="evidence" value="ECO:0007669"/>
    <property type="project" value="UniProtKB-KW"/>
</dbReference>
<dbReference type="GO" id="GO:0022900">
    <property type="term" value="P:electron transport chain"/>
    <property type="evidence" value="ECO:0007669"/>
    <property type="project" value="InterPro"/>
</dbReference>
<dbReference type="CDD" id="cd00207">
    <property type="entry name" value="fer2"/>
    <property type="match status" value="1"/>
</dbReference>
<dbReference type="FunFam" id="3.10.20.30:FF:000014">
    <property type="entry name" value="Ferredoxin"/>
    <property type="match status" value="1"/>
</dbReference>
<dbReference type="Gene3D" id="3.10.20.30">
    <property type="match status" value="1"/>
</dbReference>
<dbReference type="InterPro" id="IPR036010">
    <property type="entry name" value="2Fe-2S_ferredoxin-like_sf"/>
</dbReference>
<dbReference type="InterPro" id="IPR001041">
    <property type="entry name" value="2Fe-2S_ferredoxin-type"/>
</dbReference>
<dbReference type="InterPro" id="IPR006058">
    <property type="entry name" value="2Fe2S_fd_BS"/>
</dbReference>
<dbReference type="InterPro" id="IPR012675">
    <property type="entry name" value="Beta-grasp_dom_sf"/>
</dbReference>
<dbReference type="InterPro" id="IPR010241">
    <property type="entry name" value="Fd_pln"/>
</dbReference>
<dbReference type="NCBIfam" id="TIGR02008">
    <property type="entry name" value="fdx_plant"/>
    <property type="match status" value="1"/>
</dbReference>
<dbReference type="PANTHER" id="PTHR43112">
    <property type="entry name" value="FERREDOXIN"/>
    <property type="match status" value="1"/>
</dbReference>
<dbReference type="PANTHER" id="PTHR43112:SF3">
    <property type="entry name" value="FERREDOXIN-2, CHLOROPLASTIC"/>
    <property type="match status" value="1"/>
</dbReference>
<dbReference type="Pfam" id="PF00111">
    <property type="entry name" value="Fer2"/>
    <property type="match status" value="1"/>
</dbReference>
<dbReference type="SUPFAM" id="SSF54292">
    <property type="entry name" value="2Fe-2S ferredoxin-like"/>
    <property type="match status" value="1"/>
</dbReference>
<dbReference type="PROSITE" id="PS00197">
    <property type="entry name" value="2FE2S_FER_1"/>
    <property type="match status" value="1"/>
</dbReference>
<dbReference type="PROSITE" id="PS51085">
    <property type="entry name" value="2FE2S_FER_2"/>
    <property type="match status" value="1"/>
</dbReference>
<evidence type="ECO:0000255" key="1">
    <source>
        <dbReference type="PROSITE-ProRule" id="PRU00465"/>
    </source>
</evidence>
<evidence type="ECO:0000305" key="2"/>
<keyword id="KW-0001">2Fe-2S</keyword>
<keyword id="KW-0150">Chloroplast</keyword>
<keyword id="KW-0903">Direct protein sequencing</keyword>
<keyword id="KW-0249">Electron transport</keyword>
<keyword id="KW-0408">Iron</keyword>
<keyword id="KW-0411">Iron-sulfur</keyword>
<keyword id="KW-0479">Metal-binding</keyword>
<keyword id="KW-0934">Plastid</keyword>
<keyword id="KW-0813">Transport</keyword>